<comment type="function">
    <text evidence="1">TRAP proteins are part of a complex whose function is to bind calcium to the ER membrane and thereby regulate the retention of ER resident proteins.</text>
</comment>
<comment type="subunit">
    <text evidence="1">Heterotetramer of TRAP-alpha, TRAP-beta, TRAP-delta and TRAP-gamma.</text>
</comment>
<comment type="subcellular location">
    <subcellularLocation>
        <location evidence="1">Endoplasmic reticulum membrane</location>
        <topology evidence="1">Single-pass type I membrane protein</topology>
    </subcellularLocation>
</comment>
<comment type="similarity">
    <text evidence="4">Belongs to the TRAP-delta family.</text>
</comment>
<organism>
    <name type="scientific">Bos taurus</name>
    <name type="common">Bovine</name>
    <dbReference type="NCBI Taxonomy" id="9913"/>
    <lineage>
        <taxon>Eukaryota</taxon>
        <taxon>Metazoa</taxon>
        <taxon>Chordata</taxon>
        <taxon>Craniata</taxon>
        <taxon>Vertebrata</taxon>
        <taxon>Euteleostomi</taxon>
        <taxon>Mammalia</taxon>
        <taxon>Eutheria</taxon>
        <taxon>Laurasiatheria</taxon>
        <taxon>Artiodactyla</taxon>
        <taxon>Ruminantia</taxon>
        <taxon>Pecora</taxon>
        <taxon>Bovidae</taxon>
        <taxon>Bovinae</taxon>
        <taxon>Bos</taxon>
    </lineage>
</organism>
<keyword id="KW-1015">Disulfide bond</keyword>
<keyword id="KW-0256">Endoplasmic reticulum</keyword>
<keyword id="KW-1017">Isopeptide bond</keyword>
<keyword id="KW-0472">Membrane</keyword>
<keyword id="KW-1185">Reference proteome</keyword>
<keyword id="KW-0732">Signal</keyword>
<keyword id="KW-0812">Transmembrane</keyword>
<keyword id="KW-1133">Transmembrane helix</keyword>
<keyword id="KW-0832">Ubl conjugation</keyword>
<proteinExistence type="evidence at transcript level"/>
<sequence length="172" mass="18814">MAALASLGALALLLLSGLSCCSEACVEPQITPSYYTTSDAVISTETVFIVEISLTCKNRVQNMALYADVSGKQFPVTRGQDVGRYQVSWSLDHKSAHAGTYEVRFFDEESYSLLRKAQRNNEDVSVIPPLFTVSVDHRGTWNGPWVSTEVLAAAIGLVIYYLAFSAKSHIQA</sequence>
<accession>Q2TBX5</accession>
<reference key="1">
    <citation type="submission" date="2005-11" db="EMBL/GenBank/DDBJ databases">
        <authorList>
            <consortium name="NIH - Mammalian Gene Collection (MGC) project"/>
        </authorList>
    </citation>
    <scope>NUCLEOTIDE SEQUENCE [LARGE SCALE MRNA]</scope>
    <source>
        <strain>Crossbred X Angus</strain>
        <tissue>Liver</tissue>
    </source>
</reference>
<evidence type="ECO:0000250" key="1"/>
<evidence type="ECO:0000250" key="2">
    <source>
        <dbReference type="UniProtKB" id="P51571"/>
    </source>
</evidence>
<evidence type="ECO:0000255" key="3"/>
<evidence type="ECO:0000305" key="4"/>
<protein>
    <recommendedName>
        <fullName>Translocon-associated protein subunit delta</fullName>
        <shortName>TRAP-delta</shortName>
    </recommendedName>
    <alternativeName>
        <fullName>Signal sequence receptor subunit delta</fullName>
        <shortName>SSR-delta</shortName>
    </alternativeName>
</protein>
<feature type="signal peptide" evidence="3">
    <location>
        <begin position="1"/>
        <end position="24"/>
    </location>
</feature>
<feature type="chain" id="PRO_0000284957" description="Translocon-associated protein subunit delta">
    <location>
        <begin position="25"/>
        <end position="172"/>
    </location>
</feature>
<feature type="topological domain" description="Lumenal" evidence="3">
    <location>
        <begin position="25"/>
        <end position="143"/>
    </location>
</feature>
<feature type="transmembrane region" description="Helical" evidence="3">
    <location>
        <begin position="144"/>
        <end position="164"/>
    </location>
</feature>
<feature type="topological domain" description="Cytoplasmic" evidence="3">
    <location>
        <begin position="165"/>
        <end position="172"/>
    </location>
</feature>
<feature type="disulfide bond" evidence="1">
    <location>
        <begin position="25"/>
        <end position="56"/>
    </location>
</feature>
<feature type="cross-link" description="Glycyl lysine isopeptide (Lys-Gly) (interchain with G-Cter in ubiquitin)" evidence="2">
    <location>
        <position position="72"/>
    </location>
</feature>
<name>SSRD_BOVIN</name>
<gene>
    <name type="primary">SSR4</name>
</gene>
<dbReference type="EMBL" id="BC109500">
    <property type="protein sequence ID" value="AAI09501.1"/>
    <property type="molecule type" value="mRNA"/>
</dbReference>
<dbReference type="RefSeq" id="NP_001033592.1">
    <property type="nucleotide sequence ID" value="NM_001038503.2"/>
</dbReference>
<dbReference type="SMR" id="Q2TBX5"/>
<dbReference type="FunCoup" id="Q2TBX5">
    <property type="interactions" value="2139"/>
</dbReference>
<dbReference type="STRING" id="9913.ENSBTAP00000028556"/>
<dbReference type="PaxDb" id="9913-ENSBTAP00000028556"/>
<dbReference type="PeptideAtlas" id="Q2TBX5"/>
<dbReference type="GeneID" id="504438"/>
<dbReference type="KEGG" id="bta:504438"/>
<dbReference type="CTD" id="6748"/>
<dbReference type="VEuPathDB" id="HostDB:ENSBTAG00000021421"/>
<dbReference type="eggNOG" id="KOG4088">
    <property type="taxonomic scope" value="Eukaryota"/>
</dbReference>
<dbReference type="HOGENOM" id="CLU_100264_0_1_1"/>
<dbReference type="InParanoid" id="Q2TBX5"/>
<dbReference type="OMA" id="GPWVNSE"/>
<dbReference type="OrthoDB" id="10055808at2759"/>
<dbReference type="TreeFam" id="TF313158"/>
<dbReference type="Proteomes" id="UP000009136">
    <property type="component" value="Chromosome X"/>
</dbReference>
<dbReference type="Bgee" id="ENSBTAG00000021421">
    <property type="expression patterns" value="Expressed in caput epididymis and 110 other cell types or tissues"/>
</dbReference>
<dbReference type="GO" id="GO:0012505">
    <property type="term" value="C:endomembrane system"/>
    <property type="evidence" value="ECO:0000318"/>
    <property type="project" value="GO_Central"/>
</dbReference>
<dbReference type="GO" id="GO:0005789">
    <property type="term" value="C:endoplasmic reticulum membrane"/>
    <property type="evidence" value="ECO:0007669"/>
    <property type="project" value="UniProtKB-SubCell"/>
</dbReference>
<dbReference type="InterPro" id="IPR008855">
    <property type="entry name" value="TRAP-delta"/>
</dbReference>
<dbReference type="PANTHER" id="PTHR12731:SF1">
    <property type="entry name" value="TRANSLOCON-ASSOCIATED PROTEIN SUBUNIT DELTA"/>
    <property type="match status" value="1"/>
</dbReference>
<dbReference type="PANTHER" id="PTHR12731">
    <property type="entry name" value="TRANSLOCON-ASSOCIATED PROTEIN, DELTA SUBUNIT"/>
    <property type="match status" value="1"/>
</dbReference>
<dbReference type="Pfam" id="PF05404">
    <property type="entry name" value="TRAP-delta"/>
    <property type="match status" value="1"/>
</dbReference>